<proteinExistence type="evidence at transcript level"/>
<name>FADH1_SCHPO</name>
<feature type="chain" id="PRO_0000160783" description="Probable S-(hydroxymethyl)glutathione dehydrogenase 1">
    <location>
        <begin position="1"/>
        <end position="378"/>
    </location>
</feature>
<feature type="binding site" evidence="3">
    <location>
        <position position="47"/>
    </location>
    <ligand>
        <name>Zn(2+)</name>
        <dbReference type="ChEBI" id="CHEBI:29105"/>
        <label>1</label>
        <note>catalytic</note>
    </ligand>
</feature>
<feature type="binding site" evidence="3">
    <location>
        <position position="48"/>
    </location>
    <ligand>
        <name>NAD(+)</name>
        <dbReference type="ChEBI" id="CHEBI:57540"/>
    </ligand>
</feature>
<feature type="binding site" evidence="3">
    <location>
        <position position="69"/>
    </location>
    <ligand>
        <name>Zn(2+)</name>
        <dbReference type="ChEBI" id="CHEBI:29105"/>
        <label>1</label>
        <note>catalytic</note>
    </ligand>
</feature>
<feature type="binding site" evidence="3">
    <location>
        <position position="70"/>
    </location>
    <ligand>
        <name>Zn(2+)</name>
        <dbReference type="ChEBI" id="CHEBI:29105"/>
        <label>1</label>
        <note>catalytic</note>
    </ligand>
</feature>
<feature type="binding site" evidence="3">
    <location>
        <position position="99"/>
    </location>
    <ligand>
        <name>Zn(2+)</name>
        <dbReference type="ChEBI" id="CHEBI:29105"/>
        <label>2</label>
    </ligand>
</feature>
<feature type="binding site" evidence="3">
    <location>
        <position position="102"/>
    </location>
    <ligand>
        <name>Zn(2+)</name>
        <dbReference type="ChEBI" id="CHEBI:29105"/>
        <label>2</label>
    </ligand>
</feature>
<feature type="binding site" evidence="3">
    <location>
        <position position="105"/>
    </location>
    <ligand>
        <name>Zn(2+)</name>
        <dbReference type="ChEBI" id="CHEBI:29105"/>
        <label>2</label>
    </ligand>
</feature>
<feature type="binding site" evidence="3">
    <location>
        <position position="113"/>
    </location>
    <ligand>
        <name>Zn(2+)</name>
        <dbReference type="ChEBI" id="CHEBI:29105"/>
        <label>2</label>
    </ligand>
</feature>
<feature type="binding site" evidence="3">
    <location>
        <position position="176"/>
    </location>
    <ligand>
        <name>Zn(2+)</name>
        <dbReference type="ChEBI" id="CHEBI:29105"/>
        <label>1</label>
        <note>catalytic</note>
    </ligand>
</feature>
<feature type="binding site" evidence="3">
    <location>
        <begin position="201"/>
        <end position="206"/>
    </location>
    <ligand>
        <name>NAD(+)</name>
        <dbReference type="ChEBI" id="CHEBI:57540"/>
    </ligand>
</feature>
<feature type="binding site" evidence="3">
    <location>
        <position position="225"/>
    </location>
    <ligand>
        <name>NAD(+)</name>
        <dbReference type="ChEBI" id="CHEBI:57540"/>
    </ligand>
</feature>
<feature type="binding site" evidence="3">
    <location>
        <begin position="293"/>
        <end position="295"/>
    </location>
    <ligand>
        <name>NAD(+)</name>
        <dbReference type="ChEBI" id="CHEBI:57540"/>
    </ligand>
</feature>
<feature type="binding site" evidence="3">
    <location>
        <begin position="318"/>
        <end position="320"/>
    </location>
    <ligand>
        <name>NAD(+)</name>
        <dbReference type="ChEBI" id="CHEBI:57540"/>
    </ligand>
</feature>
<feature type="sequence conflict" description="In Ref. 1; BAA13881." evidence="4" ref="1">
    <original>D</original>
    <variation>V</variation>
    <location>
        <position position="127"/>
    </location>
</feature>
<feature type="sequence conflict" description="In Ref. 1; BAA13881." evidence="4" ref="1">
    <original>G</original>
    <variation>S</variation>
    <location>
        <position position="206"/>
    </location>
</feature>
<accession>P78870</accession>
<accession>Q9UUF6</accession>
<protein>
    <recommendedName>
        <fullName>Probable S-(hydroxymethyl)glutathione dehydrogenase 1</fullName>
        <ecNumber evidence="2">1.1.1.284</ecNumber>
    </recommendedName>
    <alternativeName>
        <fullName evidence="2">Alcohol dehydrogenase 1</fullName>
        <ecNumber evidence="2">1.1.1.1</ecNumber>
    </alternativeName>
    <alternativeName>
        <fullName>Glutathione-dependent formaldehyde dehydrogenase 1</fullName>
        <shortName>FALDH 1</shortName>
        <shortName>FDH 1</shortName>
        <shortName>FLD 1</shortName>
        <shortName>GSH-FDH 1</shortName>
        <ecNumber evidence="2">1.1.1.-</ecNumber>
    </alternativeName>
</protein>
<evidence type="ECO:0000250" key="1">
    <source>
        <dbReference type="UniProtKB" id="P06525"/>
    </source>
</evidence>
<evidence type="ECO:0000250" key="2">
    <source>
        <dbReference type="UniProtKB" id="P32771"/>
    </source>
</evidence>
<evidence type="ECO:0000250" key="3">
    <source>
        <dbReference type="UniProtKB" id="Q96533"/>
    </source>
</evidence>
<evidence type="ECO:0000305" key="4"/>
<keyword id="KW-0479">Metal-binding</keyword>
<keyword id="KW-0520">NAD</keyword>
<keyword id="KW-0560">Oxidoreductase</keyword>
<keyword id="KW-1185">Reference proteome</keyword>
<keyword id="KW-0862">Zinc</keyword>
<comment type="function">
    <text evidence="2">Oxidizes long-chain alcohols and, in the presence of glutathione, is able to oxidize formaldehyde. Also acts as a S-nitroso-glutathione reductase by catalyzing the NADH-dependent reduction of S-nitrosoglutathione, thereby regulating protein S-nitrosylation.</text>
</comment>
<comment type="catalytic activity">
    <reaction evidence="2">
        <text>a primary alcohol + NAD(+) = an aldehyde + NADH + H(+)</text>
        <dbReference type="Rhea" id="RHEA:10736"/>
        <dbReference type="ChEBI" id="CHEBI:15378"/>
        <dbReference type="ChEBI" id="CHEBI:15734"/>
        <dbReference type="ChEBI" id="CHEBI:17478"/>
        <dbReference type="ChEBI" id="CHEBI:57540"/>
        <dbReference type="ChEBI" id="CHEBI:57945"/>
        <dbReference type="EC" id="1.1.1.1"/>
    </reaction>
</comment>
<comment type="catalytic activity">
    <reaction evidence="2">
        <text>a secondary alcohol + NAD(+) = a ketone + NADH + H(+)</text>
        <dbReference type="Rhea" id="RHEA:10740"/>
        <dbReference type="ChEBI" id="CHEBI:15378"/>
        <dbReference type="ChEBI" id="CHEBI:17087"/>
        <dbReference type="ChEBI" id="CHEBI:35681"/>
        <dbReference type="ChEBI" id="CHEBI:57540"/>
        <dbReference type="ChEBI" id="CHEBI:57945"/>
        <dbReference type="EC" id="1.1.1.1"/>
    </reaction>
</comment>
<comment type="catalytic activity">
    <reaction evidence="2">
        <text>S-(hydroxymethyl)glutathione + NADP(+) = S-formylglutathione + NADPH + H(+)</text>
        <dbReference type="Rhea" id="RHEA:19981"/>
        <dbReference type="ChEBI" id="CHEBI:15378"/>
        <dbReference type="ChEBI" id="CHEBI:57688"/>
        <dbReference type="ChEBI" id="CHEBI:57783"/>
        <dbReference type="ChEBI" id="CHEBI:58349"/>
        <dbReference type="ChEBI" id="CHEBI:58758"/>
        <dbReference type="EC" id="1.1.1.284"/>
    </reaction>
</comment>
<comment type="catalytic activity">
    <reaction evidence="1">
        <text>S-(hydroxymethyl)glutathione + NAD(+) = S-formylglutathione + NADH + H(+)</text>
        <dbReference type="Rhea" id="RHEA:19985"/>
        <dbReference type="ChEBI" id="CHEBI:15378"/>
        <dbReference type="ChEBI" id="CHEBI:57540"/>
        <dbReference type="ChEBI" id="CHEBI:57688"/>
        <dbReference type="ChEBI" id="CHEBI:57945"/>
        <dbReference type="ChEBI" id="CHEBI:58758"/>
        <dbReference type="EC" id="1.1.1.284"/>
    </reaction>
</comment>
<comment type="catalytic activity">
    <reaction evidence="2">
        <text>S-nitrosoglutathione + NADH + H(+) = S-(hydroxysulfenamide)glutathione + NAD(+)</text>
        <dbReference type="Rhea" id="RHEA:78371"/>
        <dbReference type="ChEBI" id="CHEBI:15378"/>
        <dbReference type="ChEBI" id="CHEBI:57540"/>
        <dbReference type="ChEBI" id="CHEBI:57945"/>
        <dbReference type="ChEBI" id="CHEBI:145544"/>
        <dbReference type="ChEBI" id="CHEBI:229723"/>
    </reaction>
</comment>
<comment type="cofactor">
    <cofactor evidence="1">
        <name>Zn(2+)</name>
        <dbReference type="ChEBI" id="CHEBI:29105"/>
    </cofactor>
    <text evidence="1">Binds 2 Zn(2+) ions per subunit.</text>
</comment>
<comment type="similarity">
    <text evidence="4">Belongs to the zinc-containing alcohol dehydrogenase family. Class-III subfamily.</text>
</comment>
<organism>
    <name type="scientific">Schizosaccharomyces pombe (strain 972 / ATCC 24843)</name>
    <name type="common">Fission yeast</name>
    <dbReference type="NCBI Taxonomy" id="284812"/>
    <lineage>
        <taxon>Eukaryota</taxon>
        <taxon>Fungi</taxon>
        <taxon>Dikarya</taxon>
        <taxon>Ascomycota</taxon>
        <taxon>Taphrinomycotina</taxon>
        <taxon>Schizosaccharomycetes</taxon>
        <taxon>Schizosaccharomycetales</taxon>
        <taxon>Schizosaccharomycetaceae</taxon>
        <taxon>Schizosaccharomyces</taxon>
    </lineage>
</organism>
<sequence>MSFEGKTITCKAAVAWGAKEPLSIEDIQVAPPKAHEVRVKVDWSAVCHTDAYTLSGVDPEGAFPIVLGHEGAGIVESIGEGVINVRPGDHVILLYTPECKECKFCRSGKTNLCSKIRETQGRGLMPDGTSRFSCRDKTLLHYMGCSSFSQYTVVADISLVAISHSAPLRSICLLGCGVTTGFGAVTHSAKVESGSTVAVVGCGCVGLAAMQGAVAAGASRIIAIDINADKEVYAKKFGATDFIDSSKVKDLVQYVIDVTDGGVDYAFDCTGNVTVMQQELQFCHKGWGKLCVIGVAAAGKTLDFRPFLVVTGRQVLGSAFGGVKGRSELPNFVDEYMQGHFKVDEYITNEEPLKNINKAFDHMHEGKCIRCVVDMNKP</sequence>
<reference key="1">
    <citation type="journal article" date="1997" name="DNA Res.">
        <title>Identification of open reading frames in Schizosaccharomyces pombe cDNAs.</title>
        <authorList>
            <person name="Yoshioka S."/>
            <person name="Kato K."/>
            <person name="Nakai K."/>
            <person name="Okayama H."/>
            <person name="Nojima H."/>
        </authorList>
    </citation>
    <scope>NUCLEOTIDE SEQUENCE [LARGE SCALE MRNA]</scope>
    <source>
        <strain>PR745</strain>
    </source>
</reference>
<reference key="2">
    <citation type="journal article" date="2002" name="Nature">
        <title>The genome sequence of Schizosaccharomyces pombe.</title>
        <authorList>
            <person name="Wood V."/>
            <person name="Gwilliam R."/>
            <person name="Rajandream M.A."/>
            <person name="Lyne M.H."/>
            <person name="Lyne R."/>
            <person name="Stewart A."/>
            <person name="Sgouros J.G."/>
            <person name="Peat N."/>
            <person name="Hayles J."/>
            <person name="Baker S.G."/>
            <person name="Basham D."/>
            <person name="Bowman S."/>
            <person name="Brooks K."/>
            <person name="Brown D."/>
            <person name="Brown S."/>
            <person name="Chillingworth T."/>
            <person name="Churcher C.M."/>
            <person name="Collins M."/>
            <person name="Connor R."/>
            <person name="Cronin A."/>
            <person name="Davis P."/>
            <person name="Feltwell T."/>
            <person name="Fraser A."/>
            <person name="Gentles S."/>
            <person name="Goble A."/>
            <person name="Hamlin N."/>
            <person name="Harris D.E."/>
            <person name="Hidalgo J."/>
            <person name="Hodgson G."/>
            <person name="Holroyd S."/>
            <person name="Hornsby T."/>
            <person name="Howarth S."/>
            <person name="Huckle E.J."/>
            <person name="Hunt S."/>
            <person name="Jagels K."/>
            <person name="James K.D."/>
            <person name="Jones L."/>
            <person name="Jones M."/>
            <person name="Leather S."/>
            <person name="McDonald S."/>
            <person name="McLean J."/>
            <person name="Mooney P."/>
            <person name="Moule S."/>
            <person name="Mungall K.L."/>
            <person name="Murphy L.D."/>
            <person name="Niblett D."/>
            <person name="Odell C."/>
            <person name="Oliver K."/>
            <person name="O'Neil S."/>
            <person name="Pearson D."/>
            <person name="Quail M.A."/>
            <person name="Rabbinowitsch E."/>
            <person name="Rutherford K.M."/>
            <person name="Rutter S."/>
            <person name="Saunders D."/>
            <person name="Seeger K."/>
            <person name="Sharp S."/>
            <person name="Skelton J."/>
            <person name="Simmonds M.N."/>
            <person name="Squares R."/>
            <person name="Squares S."/>
            <person name="Stevens K."/>
            <person name="Taylor K."/>
            <person name="Taylor R.G."/>
            <person name="Tivey A."/>
            <person name="Walsh S.V."/>
            <person name="Warren T."/>
            <person name="Whitehead S."/>
            <person name="Woodward J.R."/>
            <person name="Volckaert G."/>
            <person name="Aert R."/>
            <person name="Robben J."/>
            <person name="Grymonprez B."/>
            <person name="Weltjens I."/>
            <person name="Vanstreels E."/>
            <person name="Rieger M."/>
            <person name="Schaefer M."/>
            <person name="Mueller-Auer S."/>
            <person name="Gabel C."/>
            <person name="Fuchs M."/>
            <person name="Duesterhoeft A."/>
            <person name="Fritzc C."/>
            <person name="Holzer E."/>
            <person name="Moestl D."/>
            <person name="Hilbert H."/>
            <person name="Borzym K."/>
            <person name="Langer I."/>
            <person name="Beck A."/>
            <person name="Lehrach H."/>
            <person name="Reinhardt R."/>
            <person name="Pohl T.M."/>
            <person name="Eger P."/>
            <person name="Zimmermann W."/>
            <person name="Wedler H."/>
            <person name="Wambutt R."/>
            <person name="Purnelle B."/>
            <person name="Goffeau A."/>
            <person name="Cadieu E."/>
            <person name="Dreano S."/>
            <person name="Gloux S."/>
            <person name="Lelaure V."/>
            <person name="Mottier S."/>
            <person name="Galibert F."/>
            <person name="Aves S.J."/>
            <person name="Xiang Z."/>
            <person name="Hunt C."/>
            <person name="Moore K."/>
            <person name="Hurst S.M."/>
            <person name="Lucas M."/>
            <person name="Rochet M."/>
            <person name="Gaillardin C."/>
            <person name="Tallada V.A."/>
            <person name="Garzon A."/>
            <person name="Thode G."/>
            <person name="Daga R.R."/>
            <person name="Cruzado L."/>
            <person name="Jimenez J."/>
            <person name="Sanchez M."/>
            <person name="del Rey F."/>
            <person name="Benito J."/>
            <person name="Dominguez A."/>
            <person name="Revuelta J.L."/>
            <person name="Moreno S."/>
            <person name="Armstrong J."/>
            <person name="Forsburg S.L."/>
            <person name="Cerutti L."/>
            <person name="Lowe T."/>
            <person name="McCombie W.R."/>
            <person name="Paulsen I."/>
            <person name="Potashkin J."/>
            <person name="Shpakovski G.V."/>
            <person name="Ussery D."/>
            <person name="Barrell B.G."/>
            <person name="Nurse P."/>
        </authorList>
    </citation>
    <scope>NUCLEOTIDE SEQUENCE [LARGE SCALE GENOMIC DNA]</scope>
    <source>
        <strain>972 / ATCC 24843</strain>
    </source>
</reference>
<dbReference type="EC" id="1.1.1.284" evidence="2"/>
<dbReference type="EC" id="1.1.1.1" evidence="2"/>
<dbReference type="EC" id="1.1.1.-" evidence="2"/>
<dbReference type="EMBL" id="D89220">
    <property type="protein sequence ID" value="BAA13881.1"/>
    <property type="molecule type" value="mRNA"/>
</dbReference>
<dbReference type="EMBL" id="CU329671">
    <property type="protein sequence ID" value="CAB51339.1"/>
    <property type="molecule type" value="Genomic_DNA"/>
</dbReference>
<dbReference type="PIR" id="T39466">
    <property type="entry name" value="T39466"/>
</dbReference>
<dbReference type="SMR" id="P78870"/>
<dbReference type="BioGRID" id="276611">
    <property type="interactions" value="2"/>
</dbReference>
<dbReference type="FunCoup" id="P78870">
    <property type="interactions" value="490"/>
</dbReference>
<dbReference type="STRING" id="284812.P78870"/>
<dbReference type="iPTMnet" id="P78870"/>
<dbReference type="PaxDb" id="4896-SPBC1539.07c.1"/>
<dbReference type="EnsemblFungi" id="SPBC1539.07c.1">
    <property type="protein sequence ID" value="SPBC1539.07c.1:pep"/>
    <property type="gene ID" value="SPBC1539.07c"/>
</dbReference>
<dbReference type="KEGG" id="spo:2540073"/>
<dbReference type="PomBase" id="SPBC1539.07c"/>
<dbReference type="VEuPathDB" id="FungiDB:SPBC1539.07c"/>
<dbReference type="eggNOG" id="KOG0022">
    <property type="taxonomic scope" value="Eukaryota"/>
</dbReference>
<dbReference type="HOGENOM" id="CLU_026673_14_0_1"/>
<dbReference type="InParanoid" id="P78870"/>
<dbReference type="OMA" id="SCYIGCG"/>
<dbReference type="PhylomeDB" id="P78870"/>
<dbReference type="Reactome" id="R-SPO-2161541">
    <property type="pathway name" value="Abacavir metabolism"/>
</dbReference>
<dbReference type="Reactome" id="R-SPO-5365859">
    <property type="pathway name" value="RA biosynthesis pathway"/>
</dbReference>
<dbReference type="Reactome" id="R-SPO-71384">
    <property type="pathway name" value="Ethanol oxidation"/>
</dbReference>
<dbReference type="PRO" id="PR:P78870"/>
<dbReference type="Proteomes" id="UP000002485">
    <property type="component" value="Chromosome II"/>
</dbReference>
<dbReference type="GO" id="GO:0005829">
    <property type="term" value="C:cytosol"/>
    <property type="evidence" value="ECO:0007005"/>
    <property type="project" value="PomBase"/>
</dbReference>
<dbReference type="GO" id="GO:0005739">
    <property type="term" value="C:mitochondrion"/>
    <property type="evidence" value="ECO:0000266"/>
    <property type="project" value="PomBase"/>
</dbReference>
<dbReference type="GO" id="GO:0005634">
    <property type="term" value="C:nucleus"/>
    <property type="evidence" value="ECO:0007005"/>
    <property type="project" value="PomBase"/>
</dbReference>
<dbReference type="GO" id="GO:0004022">
    <property type="term" value="F:alcohol dehydrogenase (NAD+) activity"/>
    <property type="evidence" value="ECO:0000318"/>
    <property type="project" value="GO_Central"/>
</dbReference>
<dbReference type="GO" id="GO:0106322">
    <property type="term" value="F:S-(hydroxymethyl)glutathione dehydrogenase (NAD+) activity"/>
    <property type="evidence" value="ECO:0007669"/>
    <property type="project" value="RHEA"/>
</dbReference>
<dbReference type="GO" id="GO:0106321">
    <property type="term" value="F:S-(hydroxymethyl)glutathione dehydrogenase (NADP+) activity"/>
    <property type="evidence" value="ECO:0007669"/>
    <property type="project" value="RHEA"/>
</dbReference>
<dbReference type="GO" id="GO:0051903">
    <property type="term" value="F:S-(hydroxymethyl)glutathione dehydrogenase [NAD(P)+] activity"/>
    <property type="evidence" value="ECO:0000318"/>
    <property type="project" value="GO_Central"/>
</dbReference>
<dbReference type="GO" id="GO:0080007">
    <property type="term" value="F:S-nitrosoglutathione reductase (NADH) activity"/>
    <property type="evidence" value="ECO:0007669"/>
    <property type="project" value="RHEA"/>
</dbReference>
<dbReference type="GO" id="GO:0008270">
    <property type="term" value="F:zinc ion binding"/>
    <property type="evidence" value="ECO:0000318"/>
    <property type="project" value="GO_Central"/>
</dbReference>
<dbReference type="GO" id="GO:0046294">
    <property type="term" value="P:formaldehyde catabolic process"/>
    <property type="evidence" value="ECO:0000318"/>
    <property type="project" value="GO_Central"/>
</dbReference>
<dbReference type="CDD" id="cd08300">
    <property type="entry name" value="alcohol_DH_class_III"/>
    <property type="match status" value="1"/>
</dbReference>
<dbReference type="FunFam" id="3.40.50.720:FF:000003">
    <property type="entry name" value="S-(hydroxymethyl)glutathione dehydrogenase"/>
    <property type="match status" value="1"/>
</dbReference>
<dbReference type="FunFam" id="3.90.180.10:FF:000001">
    <property type="entry name" value="S-(hydroxymethyl)glutathione dehydrogenase"/>
    <property type="match status" value="1"/>
</dbReference>
<dbReference type="Gene3D" id="3.90.180.10">
    <property type="entry name" value="Medium-chain alcohol dehydrogenases, catalytic domain"/>
    <property type="match status" value="1"/>
</dbReference>
<dbReference type="Gene3D" id="3.40.50.720">
    <property type="entry name" value="NAD(P)-binding Rossmann-like Domain"/>
    <property type="match status" value="1"/>
</dbReference>
<dbReference type="InterPro" id="IPR013149">
    <property type="entry name" value="ADH-like_C"/>
</dbReference>
<dbReference type="InterPro" id="IPR013154">
    <property type="entry name" value="ADH-like_N"/>
</dbReference>
<dbReference type="InterPro" id="IPR014183">
    <property type="entry name" value="ADH_3"/>
</dbReference>
<dbReference type="InterPro" id="IPR002328">
    <property type="entry name" value="ADH_Zn_CS"/>
</dbReference>
<dbReference type="InterPro" id="IPR011032">
    <property type="entry name" value="GroES-like_sf"/>
</dbReference>
<dbReference type="InterPro" id="IPR036291">
    <property type="entry name" value="NAD(P)-bd_dom_sf"/>
</dbReference>
<dbReference type="InterPro" id="IPR020843">
    <property type="entry name" value="PKS_ER"/>
</dbReference>
<dbReference type="NCBIfam" id="TIGR02818">
    <property type="entry name" value="adh_III_F_hyde"/>
    <property type="match status" value="1"/>
</dbReference>
<dbReference type="PANTHER" id="PTHR43880">
    <property type="entry name" value="ALCOHOL DEHYDROGENASE"/>
    <property type="match status" value="1"/>
</dbReference>
<dbReference type="PANTHER" id="PTHR43880:SF12">
    <property type="entry name" value="ALCOHOL DEHYDROGENASE CLASS-3"/>
    <property type="match status" value="1"/>
</dbReference>
<dbReference type="Pfam" id="PF08240">
    <property type="entry name" value="ADH_N"/>
    <property type="match status" value="1"/>
</dbReference>
<dbReference type="Pfam" id="PF00107">
    <property type="entry name" value="ADH_zinc_N"/>
    <property type="match status" value="1"/>
</dbReference>
<dbReference type="SMART" id="SM00829">
    <property type="entry name" value="PKS_ER"/>
    <property type="match status" value="1"/>
</dbReference>
<dbReference type="SUPFAM" id="SSF50129">
    <property type="entry name" value="GroES-like"/>
    <property type="match status" value="1"/>
</dbReference>
<dbReference type="SUPFAM" id="SSF51735">
    <property type="entry name" value="NAD(P)-binding Rossmann-fold domains"/>
    <property type="match status" value="1"/>
</dbReference>
<dbReference type="PROSITE" id="PS00059">
    <property type="entry name" value="ADH_ZINC"/>
    <property type="match status" value="1"/>
</dbReference>
<gene>
    <name type="ORF">SPBC1539.07c</name>
</gene>